<evidence type="ECO:0000250" key="1"/>
<evidence type="ECO:0000250" key="2">
    <source>
        <dbReference type="UniProtKB" id="P07379"/>
    </source>
</evidence>
<evidence type="ECO:0000303" key="3">
    <source>
    </source>
</evidence>
<evidence type="ECO:0000305" key="4"/>
<evidence type="ECO:0000312" key="5">
    <source>
        <dbReference type="FlyBase" id="FBgn0003067"/>
    </source>
</evidence>
<name>PCKG_DROME</name>
<gene>
    <name evidence="5" type="primary">Pepck1</name>
    <name evidence="3" type="synonym">Pepck</name>
    <name evidence="5" type="synonym">ZDF4</name>
    <name evidence="5" type="ORF">CG17725</name>
</gene>
<feature type="chain" id="PRO_0000103635" description="Phosphoenolpyruvate carboxykinase [GTP]">
    <location>
        <begin position="1"/>
        <end position="647"/>
    </location>
</feature>
<feature type="active site" evidence="2">
    <location>
        <position position="314"/>
    </location>
</feature>
<feature type="binding site" evidence="2">
    <location>
        <position position="112"/>
    </location>
    <ligand>
        <name>substrate</name>
    </ligand>
</feature>
<feature type="binding site" evidence="2">
    <location>
        <begin position="261"/>
        <end position="263"/>
    </location>
    <ligand>
        <name>substrate</name>
    </ligand>
</feature>
<feature type="binding site" evidence="2">
    <location>
        <position position="270"/>
    </location>
    <ligand>
        <name>Mn(2+)</name>
        <dbReference type="ChEBI" id="CHEBI:29035"/>
    </ligand>
</feature>
<feature type="binding site" evidence="2">
    <location>
        <position position="290"/>
    </location>
    <ligand>
        <name>Mn(2+)</name>
        <dbReference type="ChEBI" id="CHEBI:29035"/>
    </ligand>
</feature>
<feature type="binding site" evidence="2">
    <location>
        <position position="312"/>
    </location>
    <ligand>
        <name>substrate</name>
    </ligand>
</feature>
<feature type="binding site" evidence="2">
    <location>
        <begin position="313"/>
        <end position="318"/>
    </location>
    <ligand>
        <name>GTP</name>
        <dbReference type="ChEBI" id="CHEBI:37565"/>
    </ligand>
</feature>
<feature type="binding site" evidence="2">
    <location>
        <position position="337"/>
    </location>
    <ligand>
        <name>Mn(2+)</name>
        <dbReference type="ChEBI" id="CHEBI:29035"/>
    </ligand>
</feature>
<feature type="binding site" evidence="2">
    <location>
        <begin position="429"/>
        <end position="431"/>
    </location>
    <ligand>
        <name>substrate</name>
    </ligand>
</feature>
<feature type="binding site" evidence="2">
    <location>
        <position position="431"/>
    </location>
    <ligand>
        <name>GTP</name>
        <dbReference type="ChEBI" id="CHEBI:37565"/>
    </ligand>
</feature>
<feature type="binding site" evidence="2">
    <location>
        <position position="462"/>
    </location>
    <ligand>
        <name>GTP</name>
        <dbReference type="ChEBI" id="CHEBI:37565"/>
    </ligand>
</feature>
<feature type="binding site" evidence="2">
    <location>
        <begin position="554"/>
        <end position="557"/>
    </location>
    <ligand>
        <name>GTP</name>
        <dbReference type="ChEBI" id="CHEBI:37565"/>
    </ligand>
</feature>
<feature type="sequence conflict" description="In Ref. 1; CAA68463." evidence="4" ref="1">
    <original>E</original>
    <variation>V</variation>
    <location>
        <position position="302"/>
    </location>
</feature>
<feature type="sequence conflict" description="In Ref. 1; CAA68463." evidence="4" ref="1">
    <original>Q</original>
    <variation>R</variation>
    <location>
        <position position="408"/>
    </location>
</feature>
<dbReference type="EC" id="4.1.1.32"/>
<dbReference type="EMBL" id="Y00402">
    <property type="protein sequence ID" value="CAA68463.1"/>
    <property type="molecule type" value="mRNA"/>
</dbReference>
<dbReference type="EMBL" id="AE013599">
    <property type="protein sequence ID" value="AAF57676.1"/>
    <property type="molecule type" value="Genomic_DNA"/>
</dbReference>
<dbReference type="EMBL" id="BT003447">
    <property type="protein sequence ID" value="AAO39450.1"/>
    <property type="molecule type" value="mRNA"/>
</dbReference>
<dbReference type="PIR" id="A26809">
    <property type="entry name" value="QYFFGM"/>
</dbReference>
<dbReference type="RefSeq" id="NP_523784.2">
    <property type="nucleotide sequence ID" value="NM_079060.3"/>
</dbReference>
<dbReference type="SMR" id="P20007"/>
<dbReference type="BioGRID" id="62806">
    <property type="interactions" value="7"/>
</dbReference>
<dbReference type="DIP" id="DIP-22737N"/>
<dbReference type="FunCoup" id="P20007">
    <property type="interactions" value="316"/>
</dbReference>
<dbReference type="STRING" id="7227.FBpp0085880"/>
<dbReference type="PaxDb" id="7227-FBpp0085880"/>
<dbReference type="DNASU" id="37131"/>
<dbReference type="EnsemblMetazoa" id="FBtr0086701">
    <property type="protein sequence ID" value="FBpp0085880"/>
    <property type="gene ID" value="FBgn0003067"/>
</dbReference>
<dbReference type="GeneID" id="37131"/>
<dbReference type="KEGG" id="dme:Dmel_CG17725"/>
<dbReference type="AGR" id="FB:FBgn0003067"/>
<dbReference type="CTD" id="37131"/>
<dbReference type="FlyBase" id="FBgn0003067">
    <property type="gene designation" value="Pepck1"/>
</dbReference>
<dbReference type="VEuPathDB" id="VectorBase:FBgn0003067"/>
<dbReference type="eggNOG" id="KOG3749">
    <property type="taxonomic scope" value="Eukaryota"/>
</dbReference>
<dbReference type="GeneTree" id="ENSGT00390000001912"/>
<dbReference type="HOGENOM" id="CLU_028872_1_1_1"/>
<dbReference type="InParanoid" id="P20007"/>
<dbReference type="OMA" id="GPTNNWV"/>
<dbReference type="OrthoDB" id="5841594at2759"/>
<dbReference type="PhylomeDB" id="P20007"/>
<dbReference type="Reactome" id="R-DME-70263">
    <property type="pathway name" value="Gluconeogenesis"/>
</dbReference>
<dbReference type="UniPathway" id="UPA00138"/>
<dbReference type="BioGRID-ORCS" id="37131">
    <property type="hits" value="0 hits in 3 CRISPR screens"/>
</dbReference>
<dbReference type="ChiTaRS" id="Pepck">
    <property type="organism name" value="fly"/>
</dbReference>
<dbReference type="GenomeRNAi" id="37131"/>
<dbReference type="PRO" id="PR:P20007"/>
<dbReference type="Proteomes" id="UP000000803">
    <property type="component" value="Chromosome 2R"/>
</dbReference>
<dbReference type="Bgee" id="FBgn0003067">
    <property type="expression patterns" value="Expressed in arthropod fat body and 38 other cell types or tissues"/>
</dbReference>
<dbReference type="GO" id="GO:0005829">
    <property type="term" value="C:cytosol"/>
    <property type="evidence" value="ECO:0000250"/>
    <property type="project" value="FlyBase"/>
</dbReference>
<dbReference type="GO" id="GO:0005525">
    <property type="term" value="F:GTP binding"/>
    <property type="evidence" value="ECO:0007669"/>
    <property type="project" value="UniProtKB-KW"/>
</dbReference>
<dbReference type="GO" id="GO:0030145">
    <property type="term" value="F:manganese ion binding"/>
    <property type="evidence" value="ECO:0000318"/>
    <property type="project" value="GO_Central"/>
</dbReference>
<dbReference type="GO" id="GO:0004613">
    <property type="term" value="F:phosphoenolpyruvate carboxykinase (GTP) activity"/>
    <property type="evidence" value="ECO:0000250"/>
    <property type="project" value="FlyBase"/>
</dbReference>
<dbReference type="GO" id="GO:0071333">
    <property type="term" value="P:cellular response to glucose stimulus"/>
    <property type="evidence" value="ECO:0000318"/>
    <property type="project" value="GO_Central"/>
</dbReference>
<dbReference type="GO" id="GO:0006094">
    <property type="term" value="P:gluconeogenesis"/>
    <property type="evidence" value="ECO:0000315"/>
    <property type="project" value="FlyBase"/>
</dbReference>
<dbReference type="GO" id="GO:0006114">
    <property type="term" value="P:glycerol biosynthetic process"/>
    <property type="evidence" value="ECO:0000315"/>
    <property type="project" value="FlyBase"/>
</dbReference>
<dbReference type="GO" id="GO:0046327">
    <property type="term" value="P:glycerol biosynthetic process from pyruvate"/>
    <property type="evidence" value="ECO:0000318"/>
    <property type="project" value="GO_Central"/>
</dbReference>
<dbReference type="GO" id="GO:0006107">
    <property type="term" value="P:oxaloacetate metabolic process"/>
    <property type="evidence" value="ECO:0000318"/>
    <property type="project" value="GO_Central"/>
</dbReference>
<dbReference type="GO" id="GO:0019543">
    <property type="term" value="P:propionate catabolic process"/>
    <property type="evidence" value="ECO:0000318"/>
    <property type="project" value="GO_Central"/>
</dbReference>
<dbReference type="GO" id="GO:0033993">
    <property type="term" value="P:response to lipid"/>
    <property type="evidence" value="ECO:0000318"/>
    <property type="project" value="GO_Central"/>
</dbReference>
<dbReference type="GO" id="GO:0042594">
    <property type="term" value="P:response to starvation"/>
    <property type="evidence" value="ECO:0000318"/>
    <property type="project" value="GO_Central"/>
</dbReference>
<dbReference type="GO" id="GO:0005992">
    <property type="term" value="P:trehalose biosynthetic process"/>
    <property type="evidence" value="ECO:0000315"/>
    <property type="project" value="FlyBase"/>
</dbReference>
<dbReference type="GO" id="GO:0019432">
    <property type="term" value="P:triglyceride biosynthetic process"/>
    <property type="evidence" value="ECO:0000315"/>
    <property type="project" value="FlyBase"/>
</dbReference>
<dbReference type="CDD" id="cd00819">
    <property type="entry name" value="PEPCK_GTP"/>
    <property type="match status" value="1"/>
</dbReference>
<dbReference type="FunFam" id="3.90.228.20:FF:000005">
    <property type="entry name" value="Phosphoenolpyruvate carboxykinase [GTP], mitochondrial"/>
    <property type="match status" value="1"/>
</dbReference>
<dbReference type="FunFam" id="3.40.449.10:FF:000003">
    <property type="entry name" value="Phosphoenolpyruvate carboxykinase, cytosolic [GTP]"/>
    <property type="match status" value="1"/>
</dbReference>
<dbReference type="Gene3D" id="3.90.228.20">
    <property type="match status" value="1"/>
</dbReference>
<dbReference type="Gene3D" id="3.40.449.10">
    <property type="entry name" value="Phosphoenolpyruvate Carboxykinase, domain 1"/>
    <property type="match status" value="1"/>
</dbReference>
<dbReference type="Gene3D" id="2.170.8.10">
    <property type="entry name" value="Phosphoenolpyruvate Carboxykinase, domain 2"/>
    <property type="match status" value="1"/>
</dbReference>
<dbReference type="HAMAP" id="MF_00452">
    <property type="entry name" value="PEPCK_GTP"/>
    <property type="match status" value="1"/>
</dbReference>
<dbReference type="InterPro" id="IPR018091">
    <property type="entry name" value="PEP_carboxykin_GTP_CS"/>
</dbReference>
<dbReference type="InterPro" id="IPR013035">
    <property type="entry name" value="PEP_carboxykinase_C"/>
</dbReference>
<dbReference type="InterPro" id="IPR008209">
    <property type="entry name" value="PEP_carboxykinase_GTP"/>
</dbReference>
<dbReference type="InterPro" id="IPR035077">
    <property type="entry name" value="PEP_carboxykinase_GTP_C"/>
</dbReference>
<dbReference type="InterPro" id="IPR035078">
    <property type="entry name" value="PEP_carboxykinase_GTP_N"/>
</dbReference>
<dbReference type="InterPro" id="IPR008210">
    <property type="entry name" value="PEP_carboxykinase_N"/>
</dbReference>
<dbReference type="NCBIfam" id="NF003253">
    <property type="entry name" value="PRK04210.1"/>
    <property type="match status" value="1"/>
</dbReference>
<dbReference type="PANTHER" id="PTHR11561">
    <property type="entry name" value="PHOSPHOENOLPYRUVATE CARBOXYKINASE"/>
    <property type="match status" value="1"/>
</dbReference>
<dbReference type="PANTHER" id="PTHR11561:SF0">
    <property type="entry name" value="PHOSPHOENOLPYRUVATE CARBOXYKINASE [GTP]-RELATED"/>
    <property type="match status" value="1"/>
</dbReference>
<dbReference type="Pfam" id="PF00821">
    <property type="entry name" value="PEPCK_GTP"/>
    <property type="match status" value="1"/>
</dbReference>
<dbReference type="Pfam" id="PF17297">
    <property type="entry name" value="PEPCK_N"/>
    <property type="match status" value="1"/>
</dbReference>
<dbReference type="PIRSF" id="PIRSF001348">
    <property type="entry name" value="PEP_carboxykinase_GTP"/>
    <property type="match status" value="1"/>
</dbReference>
<dbReference type="SUPFAM" id="SSF68923">
    <property type="entry name" value="PEP carboxykinase N-terminal domain"/>
    <property type="match status" value="1"/>
</dbReference>
<dbReference type="SUPFAM" id="SSF53795">
    <property type="entry name" value="PEP carboxykinase-like"/>
    <property type="match status" value="1"/>
</dbReference>
<dbReference type="PROSITE" id="PS00505">
    <property type="entry name" value="PEPCK_GTP"/>
    <property type="match status" value="1"/>
</dbReference>
<proteinExistence type="evidence at transcript level"/>
<sequence>MPELIEQSKIISGNVCGLPQLHKLRQDNCGLYSHIRGIPISYGNVDLLTTGVRAFVEEGIALCQPDQVHICDGSEQENKVLIKSLLEAGTIVPLPKYDNCWLARTNPADVARVESRTFICTERREETIPTPVEGVKGTLGNWISPSDMDAAVQQRFPGCMKGRTMYVVPFSMGPVGSPLSKIGIELTDSAYVVASMRIMTRMGAAVLRQLAKKEEFVRALHSVGAPANGQVEQPSWPCDPERTIILHKPAENLIVSYGSGYGGNSLLGKKCFALRIGSTIAKQEGWLAEHMLILGITDPKGEKKYITAAFPSACGKTNLAMLNPSLANYKVECVGDDIAWMKFDSQGVLRAINPENGFFGVAPGTSMETNPIAMNTVFKNTIFTNVASTSDGGVFWEGMESSLAPNVQITDWLGKPWTKDSGKPAAHPNSRFCTPAAQCPIIDEAWEDPAGVPISAMLFGGRRPAGVPLIYEARDWTHGVFIGAAMRSEATAAAEHKGKVIMHDPFAMRPFFGYNFGDYVAHWLSMEKRGQVPKIFHVNWFRKSAEGKFMWPGYGENSRVLEWILRRVNGESCYVDSAIGHIPAEGALNLDGMKDKVDVKEIFSLPKEFWSQEVKDIRTYFESQVGADLPASIYQQLDELSSRVDNL</sequence>
<comment type="function">
    <text evidence="1">Catalyzes the conversion of oxaloacetate (OAA) to phosphoenolpyruvate (PEP), the rate-limiting step in the metabolic pathway that produces glucose from lactate and other precursors derived from the citric acid cycle.</text>
</comment>
<comment type="catalytic activity">
    <reaction>
        <text>oxaloacetate + GTP = phosphoenolpyruvate + GDP + CO2</text>
        <dbReference type="Rhea" id="RHEA:10388"/>
        <dbReference type="ChEBI" id="CHEBI:16452"/>
        <dbReference type="ChEBI" id="CHEBI:16526"/>
        <dbReference type="ChEBI" id="CHEBI:37565"/>
        <dbReference type="ChEBI" id="CHEBI:58189"/>
        <dbReference type="ChEBI" id="CHEBI:58702"/>
        <dbReference type="EC" id="4.1.1.32"/>
    </reaction>
</comment>
<comment type="cofactor">
    <cofactor evidence="1">
        <name>Mn(2+)</name>
        <dbReference type="ChEBI" id="CHEBI:29035"/>
    </cofactor>
    <text evidence="1">Binds 1 Mn(2+) ion per subunit.</text>
</comment>
<comment type="pathway">
    <text>Carbohydrate biosynthesis; gluconeogenesis.</text>
</comment>
<comment type="subunit">
    <text evidence="1">Monomer.</text>
</comment>
<comment type="similarity">
    <text evidence="4">Belongs to the phosphoenolpyruvate carboxykinase [GTP] family.</text>
</comment>
<organism>
    <name type="scientific">Drosophila melanogaster</name>
    <name type="common">Fruit fly</name>
    <dbReference type="NCBI Taxonomy" id="7227"/>
    <lineage>
        <taxon>Eukaryota</taxon>
        <taxon>Metazoa</taxon>
        <taxon>Ecdysozoa</taxon>
        <taxon>Arthropoda</taxon>
        <taxon>Hexapoda</taxon>
        <taxon>Insecta</taxon>
        <taxon>Pterygota</taxon>
        <taxon>Neoptera</taxon>
        <taxon>Endopterygota</taxon>
        <taxon>Diptera</taxon>
        <taxon>Brachycera</taxon>
        <taxon>Muscomorpha</taxon>
        <taxon>Ephydroidea</taxon>
        <taxon>Drosophilidae</taxon>
        <taxon>Drosophila</taxon>
        <taxon>Sophophora</taxon>
    </lineage>
</organism>
<reference key="1">
    <citation type="journal article" date="1987" name="Nucleic Acids Res.">
        <title>Nucleotide and deduced amino acid sequence of the phosphoenolpyruvate carboxykinase (GTP) from Drosophila melanogaster.</title>
        <authorList>
            <person name="Gundelfinger E.D."/>
            <person name="Hermans-Borgmeyer I."/>
            <person name="Grenningloh G."/>
            <person name="Zopf D."/>
        </authorList>
    </citation>
    <scope>NUCLEOTIDE SEQUENCE [MRNA]</scope>
    <source>
        <strain>Canton-S</strain>
        <tissue>Head</tissue>
    </source>
</reference>
<reference key="2">
    <citation type="journal article" date="2000" name="Science">
        <title>The genome sequence of Drosophila melanogaster.</title>
        <authorList>
            <person name="Adams M.D."/>
            <person name="Celniker S.E."/>
            <person name="Holt R.A."/>
            <person name="Evans C.A."/>
            <person name="Gocayne J.D."/>
            <person name="Amanatides P.G."/>
            <person name="Scherer S.E."/>
            <person name="Li P.W."/>
            <person name="Hoskins R.A."/>
            <person name="Galle R.F."/>
            <person name="George R.A."/>
            <person name="Lewis S.E."/>
            <person name="Richards S."/>
            <person name="Ashburner M."/>
            <person name="Henderson S.N."/>
            <person name="Sutton G.G."/>
            <person name="Wortman J.R."/>
            <person name="Yandell M.D."/>
            <person name="Zhang Q."/>
            <person name="Chen L.X."/>
            <person name="Brandon R.C."/>
            <person name="Rogers Y.-H.C."/>
            <person name="Blazej R.G."/>
            <person name="Champe M."/>
            <person name="Pfeiffer B.D."/>
            <person name="Wan K.H."/>
            <person name="Doyle C."/>
            <person name="Baxter E.G."/>
            <person name="Helt G."/>
            <person name="Nelson C.R."/>
            <person name="Miklos G.L.G."/>
            <person name="Abril J.F."/>
            <person name="Agbayani A."/>
            <person name="An H.-J."/>
            <person name="Andrews-Pfannkoch C."/>
            <person name="Baldwin D."/>
            <person name="Ballew R.M."/>
            <person name="Basu A."/>
            <person name="Baxendale J."/>
            <person name="Bayraktaroglu L."/>
            <person name="Beasley E.M."/>
            <person name="Beeson K.Y."/>
            <person name="Benos P.V."/>
            <person name="Berman B.P."/>
            <person name="Bhandari D."/>
            <person name="Bolshakov S."/>
            <person name="Borkova D."/>
            <person name="Botchan M.R."/>
            <person name="Bouck J."/>
            <person name="Brokstein P."/>
            <person name="Brottier P."/>
            <person name="Burtis K.C."/>
            <person name="Busam D.A."/>
            <person name="Butler H."/>
            <person name="Cadieu E."/>
            <person name="Center A."/>
            <person name="Chandra I."/>
            <person name="Cherry J.M."/>
            <person name="Cawley S."/>
            <person name="Dahlke C."/>
            <person name="Davenport L.B."/>
            <person name="Davies P."/>
            <person name="de Pablos B."/>
            <person name="Delcher A."/>
            <person name="Deng Z."/>
            <person name="Mays A.D."/>
            <person name="Dew I."/>
            <person name="Dietz S.M."/>
            <person name="Dodson K."/>
            <person name="Doup L.E."/>
            <person name="Downes M."/>
            <person name="Dugan-Rocha S."/>
            <person name="Dunkov B.C."/>
            <person name="Dunn P."/>
            <person name="Durbin K.J."/>
            <person name="Evangelista C.C."/>
            <person name="Ferraz C."/>
            <person name="Ferriera S."/>
            <person name="Fleischmann W."/>
            <person name="Fosler C."/>
            <person name="Gabrielian A.E."/>
            <person name="Garg N.S."/>
            <person name="Gelbart W.M."/>
            <person name="Glasser K."/>
            <person name="Glodek A."/>
            <person name="Gong F."/>
            <person name="Gorrell J.H."/>
            <person name="Gu Z."/>
            <person name="Guan P."/>
            <person name="Harris M."/>
            <person name="Harris N.L."/>
            <person name="Harvey D.A."/>
            <person name="Heiman T.J."/>
            <person name="Hernandez J.R."/>
            <person name="Houck J."/>
            <person name="Hostin D."/>
            <person name="Houston K.A."/>
            <person name="Howland T.J."/>
            <person name="Wei M.-H."/>
            <person name="Ibegwam C."/>
            <person name="Jalali M."/>
            <person name="Kalush F."/>
            <person name="Karpen G.H."/>
            <person name="Ke Z."/>
            <person name="Kennison J.A."/>
            <person name="Ketchum K.A."/>
            <person name="Kimmel B.E."/>
            <person name="Kodira C.D."/>
            <person name="Kraft C.L."/>
            <person name="Kravitz S."/>
            <person name="Kulp D."/>
            <person name="Lai Z."/>
            <person name="Lasko P."/>
            <person name="Lei Y."/>
            <person name="Levitsky A.A."/>
            <person name="Li J.H."/>
            <person name="Li Z."/>
            <person name="Liang Y."/>
            <person name="Lin X."/>
            <person name="Liu X."/>
            <person name="Mattei B."/>
            <person name="McIntosh T.C."/>
            <person name="McLeod M.P."/>
            <person name="McPherson D."/>
            <person name="Merkulov G."/>
            <person name="Milshina N.V."/>
            <person name="Mobarry C."/>
            <person name="Morris J."/>
            <person name="Moshrefi A."/>
            <person name="Mount S.M."/>
            <person name="Moy M."/>
            <person name="Murphy B."/>
            <person name="Murphy L."/>
            <person name="Muzny D.M."/>
            <person name="Nelson D.L."/>
            <person name="Nelson D.R."/>
            <person name="Nelson K.A."/>
            <person name="Nixon K."/>
            <person name="Nusskern D.R."/>
            <person name="Pacleb J.M."/>
            <person name="Palazzolo M."/>
            <person name="Pittman G.S."/>
            <person name="Pan S."/>
            <person name="Pollard J."/>
            <person name="Puri V."/>
            <person name="Reese M.G."/>
            <person name="Reinert K."/>
            <person name="Remington K."/>
            <person name="Saunders R.D.C."/>
            <person name="Scheeler F."/>
            <person name="Shen H."/>
            <person name="Shue B.C."/>
            <person name="Siden-Kiamos I."/>
            <person name="Simpson M."/>
            <person name="Skupski M.P."/>
            <person name="Smith T.J."/>
            <person name="Spier E."/>
            <person name="Spradling A.C."/>
            <person name="Stapleton M."/>
            <person name="Strong R."/>
            <person name="Sun E."/>
            <person name="Svirskas R."/>
            <person name="Tector C."/>
            <person name="Turner R."/>
            <person name="Venter E."/>
            <person name="Wang A.H."/>
            <person name="Wang X."/>
            <person name="Wang Z.-Y."/>
            <person name="Wassarman D.A."/>
            <person name="Weinstock G.M."/>
            <person name="Weissenbach J."/>
            <person name="Williams S.M."/>
            <person name="Woodage T."/>
            <person name="Worley K.C."/>
            <person name="Wu D."/>
            <person name="Yang S."/>
            <person name="Yao Q.A."/>
            <person name="Ye J."/>
            <person name="Yeh R.-F."/>
            <person name="Zaveri J.S."/>
            <person name="Zhan M."/>
            <person name="Zhang G."/>
            <person name="Zhao Q."/>
            <person name="Zheng L."/>
            <person name="Zheng X.H."/>
            <person name="Zhong F.N."/>
            <person name="Zhong W."/>
            <person name="Zhou X."/>
            <person name="Zhu S.C."/>
            <person name="Zhu X."/>
            <person name="Smith H.O."/>
            <person name="Gibbs R.A."/>
            <person name="Myers E.W."/>
            <person name="Rubin G.M."/>
            <person name="Venter J.C."/>
        </authorList>
    </citation>
    <scope>NUCLEOTIDE SEQUENCE [LARGE SCALE GENOMIC DNA]</scope>
    <source>
        <strain>Berkeley</strain>
    </source>
</reference>
<reference key="3">
    <citation type="journal article" date="2002" name="Genome Biol.">
        <title>Annotation of the Drosophila melanogaster euchromatic genome: a systematic review.</title>
        <authorList>
            <person name="Misra S."/>
            <person name="Crosby M.A."/>
            <person name="Mungall C.J."/>
            <person name="Matthews B.B."/>
            <person name="Campbell K.S."/>
            <person name="Hradecky P."/>
            <person name="Huang Y."/>
            <person name="Kaminker J.S."/>
            <person name="Millburn G.H."/>
            <person name="Prochnik S.E."/>
            <person name="Smith C.D."/>
            <person name="Tupy J.L."/>
            <person name="Whitfield E.J."/>
            <person name="Bayraktaroglu L."/>
            <person name="Berman B.P."/>
            <person name="Bettencourt B.R."/>
            <person name="Celniker S.E."/>
            <person name="de Grey A.D.N.J."/>
            <person name="Drysdale R.A."/>
            <person name="Harris N.L."/>
            <person name="Richter J."/>
            <person name="Russo S."/>
            <person name="Schroeder A.J."/>
            <person name="Shu S.Q."/>
            <person name="Stapleton M."/>
            <person name="Yamada C."/>
            <person name="Ashburner M."/>
            <person name="Gelbart W.M."/>
            <person name="Rubin G.M."/>
            <person name="Lewis S.E."/>
        </authorList>
    </citation>
    <scope>GENOME REANNOTATION</scope>
    <source>
        <strain>Berkeley</strain>
    </source>
</reference>
<reference key="4">
    <citation type="submission" date="2003-02" db="EMBL/GenBank/DDBJ databases">
        <authorList>
            <person name="Stapleton M."/>
            <person name="Brokstein P."/>
            <person name="Hong L."/>
            <person name="Agbayani A."/>
            <person name="Carlson J.W."/>
            <person name="Champe M."/>
            <person name="Chavez C."/>
            <person name="Dorsett V."/>
            <person name="Dresnek D."/>
            <person name="Farfan D."/>
            <person name="Frise E."/>
            <person name="George R.A."/>
            <person name="Gonzalez M."/>
            <person name="Guarin H."/>
            <person name="Kronmiller B."/>
            <person name="Li P.W."/>
            <person name="Liao G."/>
            <person name="Miranda A."/>
            <person name="Mungall C.J."/>
            <person name="Nunoo J."/>
            <person name="Pacleb J.M."/>
            <person name="Paragas V."/>
            <person name="Park S."/>
            <person name="Patel S."/>
            <person name="Phouanenavong S."/>
            <person name="Wan K.H."/>
            <person name="Yu C."/>
            <person name="Lewis S.E."/>
            <person name="Rubin G.M."/>
            <person name="Celniker S.E."/>
        </authorList>
    </citation>
    <scope>NUCLEOTIDE SEQUENCE [LARGE SCALE MRNA]</scope>
    <source>
        <strain>Berkeley</strain>
        <tissue>Head</tissue>
    </source>
</reference>
<accession>P20007</accession>
<accession>A1ZB97</accession>
<accession>Q53YF8</accession>
<accession>Q9V8J0</accession>
<protein>
    <recommendedName>
        <fullName evidence="3">Phosphoenolpyruvate carboxykinase [GTP]</fullName>
        <ecNumber>4.1.1.32</ecNumber>
    </recommendedName>
    <alternativeName>
        <fullName evidence="4">Phosphoenolpyruvate carboxykinase 1</fullName>
    </alternativeName>
</protein>
<keyword id="KW-0210">Decarboxylase</keyword>
<keyword id="KW-0312">Gluconeogenesis</keyword>
<keyword id="KW-0342">GTP-binding</keyword>
<keyword id="KW-0456">Lyase</keyword>
<keyword id="KW-0464">Manganese</keyword>
<keyword id="KW-0479">Metal-binding</keyword>
<keyword id="KW-0547">Nucleotide-binding</keyword>
<keyword id="KW-1185">Reference proteome</keyword>